<evidence type="ECO:0000255" key="1">
    <source>
        <dbReference type="HAMAP-Rule" id="MF_00446"/>
    </source>
</evidence>
<organism>
    <name type="scientific">Yersinia pestis (strain Pestoides F)</name>
    <dbReference type="NCBI Taxonomy" id="386656"/>
    <lineage>
        <taxon>Bacteria</taxon>
        <taxon>Pseudomonadati</taxon>
        <taxon>Pseudomonadota</taxon>
        <taxon>Gammaproteobacteria</taxon>
        <taxon>Enterobacterales</taxon>
        <taxon>Yersiniaceae</taxon>
        <taxon>Yersinia</taxon>
    </lineage>
</organism>
<name>PAND_YERPP</name>
<accession>A4TPV3</accession>
<gene>
    <name evidence="1" type="primary">panD</name>
    <name type="ordered locus">YPDSF_2953</name>
</gene>
<proteinExistence type="inferred from homology"/>
<comment type="function">
    <text evidence="1">Catalyzes the pyruvoyl-dependent decarboxylation of aspartate to produce beta-alanine.</text>
</comment>
<comment type="catalytic activity">
    <reaction evidence="1">
        <text>L-aspartate + H(+) = beta-alanine + CO2</text>
        <dbReference type="Rhea" id="RHEA:19497"/>
        <dbReference type="ChEBI" id="CHEBI:15378"/>
        <dbReference type="ChEBI" id="CHEBI:16526"/>
        <dbReference type="ChEBI" id="CHEBI:29991"/>
        <dbReference type="ChEBI" id="CHEBI:57966"/>
        <dbReference type="EC" id="4.1.1.11"/>
    </reaction>
</comment>
<comment type="cofactor">
    <cofactor evidence="1">
        <name>pyruvate</name>
        <dbReference type="ChEBI" id="CHEBI:15361"/>
    </cofactor>
    <text evidence="1">Binds 1 pyruvoyl group covalently per subunit.</text>
</comment>
<comment type="pathway">
    <text evidence="1">Cofactor biosynthesis; (R)-pantothenate biosynthesis; beta-alanine from L-aspartate: step 1/1.</text>
</comment>
<comment type="subunit">
    <text evidence="1">Heterooctamer of four alpha and four beta subunits.</text>
</comment>
<comment type="subcellular location">
    <subcellularLocation>
        <location evidence="1">Cytoplasm</location>
    </subcellularLocation>
</comment>
<comment type="PTM">
    <text evidence="1">Is synthesized initially as an inactive proenzyme, which is activated by self-cleavage at a specific serine bond to produce a beta-subunit with a hydroxyl group at its C-terminus and an alpha-subunit with a pyruvoyl group at its N-terminus.</text>
</comment>
<comment type="similarity">
    <text evidence="1">Belongs to the PanD family.</text>
</comment>
<feature type="chain" id="PRO_0000307087" description="Aspartate 1-decarboxylase beta chain" evidence="1">
    <location>
        <begin position="1"/>
        <end position="24"/>
    </location>
</feature>
<feature type="chain" id="PRO_0000307088" description="Aspartate 1-decarboxylase alpha chain" evidence="1">
    <location>
        <begin position="25"/>
        <end position="126"/>
    </location>
</feature>
<feature type="active site" description="Schiff-base intermediate with substrate; via pyruvic acid" evidence="1">
    <location>
        <position position="25"/>
    </location>
</feature>
<feature type="active site" description="Proton donor" evidence="1">
    <location>
        <position position="58"/>
    </location>
</feature>
<feature type="binding site" evidence="1">
    <location>
        <position position="57"/>
    </location>
    <ligand>
        <name>substrate</name>
    </ligand>
</feature>
<feature type="binding site" evidence="1">
    <location>
        <begin position="73"/>
        <end position="75"/>
    </location>
    <ligand>
        <name>substrate</name>
    </ligand>
</feature>
<feature type="modified residue" description="Pyruvic acid (Ser)" evidence="1">
    <location>
        <position position="25"/>
    </location>
</feature>
<protein>
    <recommendedName>
        <fullName evidence="1">Aspartate 1-decarboxylase</fullName>
        <ecNumber evidence="1">4.1.1.11</ecNumber>
    </recommendedName>
    <alternativeName>
        <fullName evidence="1">Aspartate alpha-decarboxylase</fullName>
    </alternativeName>
    <component>
        <recommendedName>
            <fullName evidence="1">Aspartate 1-decarboxylase beta chain</fullName>
        </recommendedName>
    </component>
    <component>
        <recommendedName>
            <fullName evidence="1">Aspartate 1-decarboxylase alpha chain</fullName>
        </recommendedName>
    </component>
</protein>
<keyword id="KW-0068">Autocatalytic cleavage</keyword>
<keyword id="KW-0963">Cytoplasm</keyword>
<keyword id="KW-0210">Decarboxylase</keyword>
<keyword id="KW-0456">Lyase</keyword>
<keyword id="KW-0566">Pantothenate biosynthesis</keyword>
<keyword id="KW-0670">Pyruvate</keyword>
<keyword id="KW-0704">Schiff base</keyword>
<keyword id="KW-0865">Zymogen</keyword>
<sequence length="126" mass="13906">MIRTMLQGKLHRVKVTQADLHYEGSCAIDQDFLEAAGILEYEAIDIYNVDNGQRFSTYAIAAERGSRIISVNGAAARCACVGDKLIICSYVQMSYAAARLHHPKVAYFEGENQLQRKAKAVPVQVA</sequence>
<reference key="1">
    <citation type="submission" date="2007-02" db="EMBL/GenBank/DDBJ databases">
        <title>Complete sequence of chromosome of Yersinia pestis Pestoides F.</title>
        <authorList>
            <consortium name="US DOE Joint Genome Institute"/>
            <person name="Copeland A."/>
            <person name="Lucas S."/>
            <person name="Lapidus A."/>
            <person name="Barry K."/>
            <person name="Detter J.C."/>
            <person name="Glavina del Rio T."/>
            <person name="Hammon N."/>
            <person name="Israni S."/>
            <person name="Dalin E."/>
            <person name="Tice H."/>
            <person name="Pitluck S."/>
            <person name="Di Bartolo G."/>
            <person name="Chain P."/>
            <person name="Malfatti S."/>
            <person name="Shin M."/>
            <person name="Vergez L."/>
            <person name="Schmutz J."/>
            <person name="Larimer F."/>
            <person name="Land M."/>
            <person name="Hauser L."/>
            <person name="Worsham P."/>
            <person name="Chu M."/>
            <person name="Bearden S."/>
            <person name="Garcia E."/>
            <person name="Richardson P."/>
        </authorList>
    </citation>
    <scope>NUCLEOTIDE SEQUENCE [LARGE SCALE GENOMIC DNA]</scope>
    <source>
        <strain>Pestoides F</strain>
    </source>
</reference>
<dbReference type="EC" id="4.1.1.11" evidence="1"/>
<dbReference type="EMBL" id="CP000668">
    <property type="protein sequence ID" value="ABP41315.1"/>
    <property type="molecule type" value="Genomic_DNA"/>
</dbReference>
<dbReference type="RefSeq" id="WP_002209347.1">
    <property type="nucleotide sequence ID" value="NZ_CP009715.1"/>
</dbReference>
<dbReference type="SMR" id="A4TPV3"/>
<dbReference type="GeneID" id="57975306"/>
<dbReference type="KEGG" id="ypp:YPDSF_2953"/>
<dbReference type="PATRIC" id="fig|386656.14.peg.1412"/>
<dbReference type="UniPathway" id="UPA00028">
    <property type="reaction ID" value="UER00002"/>
</dbReference>
<dbReference type="GO" id="GO:0005829">
    <property type="term" value="C:cytosol"/>
    <property type="evidence" value="ECO:0007669"/>
    <property type="project" value="TreeGrafter"/>
</dbReference>
<dbReference type="GO" id="GO:0004068">
    <property type="term" value="F:aspartate 1-decarboxylase activity"/>
    <property type="evidence" value="ECO:0007669"/>
    <property type="project" value="UniProtKB-UniRule"/>
</dbReference>
<dbReference type="GO" id="GO:0006523">
    <property type="term" value="P:alanine biosynthetic process"/>
    <property type="evidence" value="ECO:0007669"/>
    <property type="project" value="InterPro"/>
</dbReference>
<dbReference type="GO" id="GO:0015940">
    <property type="term" value="P:pantothenate biosynthetic process"/>
    <property type="evidence" value="ECO:0007669"/>
    <property type="project" value="UniProtKB-UniRule"/>
</dbReference>
<dbReference type="CDD" id="cd06919">
    <property type="entry name" value="Asp_decarbox"/>
    <property type="match status" value="1"/>
</dbReference>
<dbReference type="FunFam" id="2.40.40.20:FF:000004">
    <property type="entry name" value="Aspartate 1-decarboxylase"/>
    <property type="match status" value="1"/>
</dbReference>
<dbReference type="Gene3D" id="2.40.40.20">
    <property type="match status" value="1"/>
</dbReference>
<dbReference type="HAMAP" id="MF_00446">
    <property type="entry name" value="PanD"/>
    <property type="match status" value="1"/>
</dbReference>
<dbReference type="InterPro" id="IPR009010">
    <property type="entry name" value="Asp_de-COase-like_dom_sf"/>
</dbReference>
<dbReference type="InterPro" id="IPR003190">
    <property type="entry name" value="Asp_decarbox"/>
</dbReference>
<dbReference type="NCBIfam" id="TIGR00223">
    <property type="entry name" value="panD"/>
    <property type="match status" value="1"/>
</dbReference>
<dbReference type="PANTHER" id="PTHR21012">
    <property type="entry name" value="ASPARTATE 1-DECARBOXYLASE"/>
    <property type="match status" value="1"/>
</dbReference>
<dbReference type="PANTHER" id="PTHR21012:SF0">
    <property type="entry name" value="ASPARTATE 1-DECARBOXYLASE"/>
    <property type="match status" value="1"/>
</dbReference>
<dbReference type="Pfam" id="PF02261">
    <property type="entry name" value="Asp_decarbox"/>
    <property type="match status" value="1"/>
</dbReference>
<dbReference type="PIRSF" id="PIRSF006246">
    <property type="entry name" value="Asp_decarbox"/>
    <property type="match status" value="1"/>
</dbReference>
<dbReference type="SUPFAM" id="SSF50692">
    <property type="entry name" value="ADC-like"/>
    <property type="match status" value="1"/>
</dbReference>